<sequence>MTEHLPTSQVSFDENALIAERRAKLLALRAQGVAYPNDVKREHYAADVQVAFANVETWTAEALEASGDRVRMAGRLMAKRLMGKASFAQIQDESGRIQLLIQSNVLGEDSYAAFKVLDVGDIIAVEGGLTRTRTGELSVKVNVLRLLTKALRPLPDKWHGLTDVEQRYRQRYVDLIVTPESREIFIKRSKIIRALRTWLDARLFLEVETPMMHYIPGGAAAKPFVTYHNALDLELYLRVAPELYLKRLVVGGLERVYEINRNFRNEGVSTRHNPEFTMLELYEAYSTYHEVMDLAETMIRDTAQSVLGTTQVIWDGAQIDLGPIFRRWRMDEAVCHHNPEISVAECTDRDALLLHCERLKIKVKSSYGWGRLLLSIFEATVEHTLIQPTFITDHPVEISPLARESDIEPGYTDRFELFINGKEIANGFSELNDPEEQAMRFQKQVEAKEGGDDEAMYYDADYIRALEYGMAPTGGLGIGVDRLVMLLTGSTSIRDVLLFPYMRPER</sequence>
<comment type="catalytic activity">
    <reaction>
        <text>tRNA(Lys) + L-lysine + ATP = L-lysyl-tRNA(Lys) + AMP + diphosphate</text>
        <dbReference type="Rhea" id="RHEA:20792"/>
        <dbReference type="Rhea" id="RHEA-COMP:9696"/>
        <dbReference type="Rhea" id="RHEA-COMP:9697"/>
        <dbReference type="ChEBI" id="CHEBI:30616"/>
        <dbReference type="ChEBI" id="CHEBI:32551"/>
        <dbReference type="ChEBI" id="CHEBI:33019"/>
        <dbReference type="ChEBI" id="CHEBI:78442"/>
        <dbReference type="ChEBI" id="CHEBI:78529"/>
        <dbReference type="ChEBI" id="CHEBI:456215"/>
        <dbReference type="EC" id="6.1.1.6"/>
    </reaction>
</comment>
<comment type="cofactor">
    <cofactor evidence="1">
        <name>Mg(2+)</name>
        <dbReference type="ChEBI" id="CHEBI:18420"/>
    </cofactor>
    <text evidence="1">Binds 3 Mg(2+) ions per subunit.</text>
</comment>
<comment type="subunit">
    <text evidence="1">Homodimer.</text>
</comment>
<comment type="subcellular location">
    <subcellularLocation>
        <location evidence="1">Cytoplasm</location>
    </subcellularLocation>
</comment>
<comment type="similarity">
    <text evidence="2">Belongs to the class-II aminoacyl-tRNA synthetase family.</text>
</comment>
<gene>
    <name type="primary">lysS</name>
    <name type="ordered locus">XF_1112</name>
</gene>
<organism>
    <name type="scientific">Xylella fastidiosa (strain 9a5c)</name>
    <dbReference type="NCBI Taxonomy" id="160492"/>
    <lineage>
        <taxon>Bacteria</taxon>
        <taxon>Pseudomonadati</taxon>
        <taxon>Pseudomonadota</taxon>
        <taxon>Gammaproteobacteria</taxon>
        <taxon>Lysobacterales</taxon>
        <taxon>Lysobacteraceae</taxon>
        <taxon>Xylella</taxon>
    </lineage>
</organism>
<name>SYK_XYLFA</name>
<keyword id="KW-0030">Aminoacyl-tRNA synthetase</keyword>
<keyword id="KW-0067">ATP-binding</keyword>
<keyword id="KW-0963">Cytoplasm</keyword>
<keyword id="KW-0436">Ligase</keyword>
<keyword id="KW-0460">Magnesium</keyword>
<keyword id="KW-0479">Metal-binding</keyword>
<keyword id="KW-0547">Nucleotide-binding</keyword>
<keyword id="KW-0648">Protein biosynthesis</keyword>
<dbReference type="EC" id="6.1.1.6"/>
<dbReference type="EMBL" id="AE003849">
    <property type="protein sequence ID" value="AAF83922.1"/>
    <property type="molecule type" value="Genomic_DNA"/>
</dbReference>
<dbReference type="PIR" id="E82721">
    <property type="entry name" value="E82721"/>
</dbReference>
<dbReference type="RefSeq" id="WP_010893629.1">
    <property type="nucleotide sequence ID" value="NC_002488.3"/>
</dbReference>
<dbReference type="SMR" id="Q9PEB6"/>
<dbReference type="STRING" id="160492.XF_1112"/>
<dbReference type="KEGG" id="xfa:XF_1112"/>
<dbReference type="eggNOG" id="COG1190">
    <property type="taxonomic scope" value="Bacteria"/>
</dbReference>
<dbReference type="HOGENOM" id="CLU_008255_6_0_6"/>
<dbReference type="Proteomes" id="UP000000812">
    <property type="component" value="Chromosome"/>
</dbReference>
<dbReference type="GO" id="GO:0005829">
    <property type="term" value="C:cytosol"/>
    <property type="evidence" value="ECO:0007669"/>
    <property type="project" value="TreeGrafter"/>
</dbReference>
<dbReference type="GO" id="GO:0005524">
    <property type="term" value="F:ATP binding"/>
    <property type="evidence" value="ECO:0007669"/>
    <property type="project" value="UniProtKB-UniRule"/>
</dbReference>
<dbReference type="GO" id="GO:0004824">
    <property type="term" value="F:lysine-tRNA ligase activity"/>
    <property type="evidence" value="ECO:0007669"/>
    <property type="project" value="UniProtKB-UniRule"/>
</dbReference>
<dbReference type="GO" id="GO:0000287">
    <property type="term" value="F:magnesium ion binding"/>
    <property type="evidence" value="ECO:0007669"/>
    <property type="project" value="UniProtKB-UniRule"/>
</dbReference>
<dbReference type="GO" id="GO:0000049">
    <property type="term" value="F:tRNA binding"/>
    <property type="evidence" value="ECO:0007669"/>
    <property type="project" value="TreeGrafter"/>
</dbReference>
<dbReference type="GO" id="GO:0006430">
    <property type="term" value="P:lysyl-tRNA aminoacylation"/>
    <property type="evidence" value="ECO:0007669"/>
    <property type="project" value="UniProtKB-UniRule"/>
</dbReference>
<dbReference type="CDD" id="cd00775">
    <property type="entry name" value="LysRS_core"/>
    <property type="match status" value="1"/>
</dbReference>
<dbReference type="CDD" id="cd04322">
    <property type="entry name" value="LysRS_N"/>
    <property type="match status" value="1"/>
</dbReference>
<dbReference type="FunFam" id="2.40.50.140:FF:000024">
    <property type="entry name" value="Lysine--tRNA ligase"/>
    <property type="match status" value="1"/>
</dbReference>
<dbReference type="FunFam" id="3.30.930.10:FF:000001">
    <property type="entry name" value="Lysine--tRNA ligase"/>
    <property type="match status" value="1"/>
</dbReference>
<dbReference type="Gene3D" id="3.30.930.10">
    <property type="entry name" value="Bira Bifunctional Protein, Domain 2"/>
    <property type="match status" value="1"/>
</dbReference>
<dbReference type="Gene3D" id="2.40.50.140">
    <property type="entry name" value="Nucleic acid-binding proteins"/>
    <property type="match status" value="1"/>
</dbReference>
<dbReference type="HAMAP" id="MF_00252">
    <property type="entry name" value="Lys_tRNA_synth_class2"/>
    <property type="match status" value="1"/>
</dbReference>
<dbReference type="InterPro" id="IPR004364">
    <property type="entry name" value="Aa-tRNA-synt_II"/>
</dbReference>
<dbReference type="InterPro" id="IPR006195">
    <property type="entry name" value="aa-tRNA-synth_II"/>
</dbReference>
<dbReference type="InterPro" id="IPR045864">
    <property type="entry name" value="aa-tRNA-synth_II/BPL/LPL"/>
</dbReference>
<dbReference type="InterPro" id="IPR002313">
    <property type="entry name" value="Lys-tRNA-ligase_II"/>
</dbReference>
<dbReference type="InterPro" id="IPR044136">
    <property type="entry name" value="Lys-tRNA-ligase_II_N"/>
</dbReference>
<dbReference type="InterPro" id="IPR018149">
    <property type="entry name" value="Lys-tRNA-synth_II_C"/>
</dbReference>
<dbReference type="InterPro" id="IPR012340">
    <property type="entry name" value="NA-bd_OB-fold"/>
</dbReference>
<dbReference type="InterPro" id="IPR004365">
    <property type="entry name" value="NA-bd_OB_tRNA"/>
</dbReference>
<dbReference type="NCBIfam" id="TIGR00499">
    <property type="entry name" value="lysS_bact"/>
    <property type="match status" value="1"/>
</dbReference>
<dbReference type="NCBIfam" id="NF001756">
    <property type="entry name" value="PRK00484.1"/>
    <property type="match status" value="1"/>
</dbReference>
<dbReference type="PANTHER" id="PTHR42918:SF15">
    <property type="entry name" value="LYSINE--TRNA LIGASE, CHLOROPLASTIC_MITOCHONDRIAL"/>
    <property type="match status" value="1"/>
</dbReference>
<dbReference type="PANTHER" id="PTHR42918">
    <property type="entry name" value="LYSYL-TRNA SYNTHETASE"/>
    <property type="match status" value="1"/>
</dbReference>
<dbReference type="Pfam" id="PF00152">
    <property type="entry name" value="tRNA-synt_2"/>
    <property type="match status" value="1"/>
</dbReference>
<dbReference type="Pfam" id="PF01336">
    <property type="entry name" value="tRNA_anti-codon"/>
    <property type="match status" value="1"/>
</dbReference>
<dbReference type="PRINTS" id="PR00982">
    <property type="entry name" value="TRNASYNTHLYS"/>
</dbReference>
<dbReference type="SUPFAM" id="SSF55681">
    <property type="entry name" value="Class II aaRS and biotin synthetases"/>
    <property type="match status" value="1"/>
</dbReference>
<dbReference type="SUPFAM" id="SSF50249">
    <property type="entry name" value="Nucleic acid-binding proteins"/>
    <property type="match status" value="1"/>
</dbReference>
<dbReference type="PROSITE" id="PS50862">
    <property type="entry name" value="AA_TRNA_LIGASE_II"/>
    <property type="match status" value="1"/>
</dbReference>
<evidence type="ECO:0000250" key="1"/>
<evidence type="ECO:0000305" key="2"/>
<feature type="chain" id="PRO_0000152708" description="Lysine--tRNA ligase">
    <location>
        <begin position="1"/>
        <end position="506"/>
    </location>
</feature>
<feature type="binding site" evidence="1">
    <location>
        <position position="416"/>
    </location>
    <ligand>
        <name>Mg(2+)</name>
        <dbReference type="ChEBI" id="CHEBI:18420"/>
        <label>1</label>
    </ligand>
</feature>
<feature type="binding site" evidence="1">
    <location>
        <position position="423"/>
    </location>
    <ligand>
        <name>Mg(2+)</name>
        <dbReference type="ChEBI" id="CHEBI:18420"/>
        <label>1</label>
    </ligand>
</feature>
<feature type="binding site" evidence="1">
    <location>
        <position position="423"/>
    </location>
    <ligand>
        <name>Mg(2+)</name>
        <dbReference type="ChEBI" id="CHEBI:18420"/>
        <label>2</label>
    </ligand>
</feature>
<proteinExistence type="inferred from homology"/>
<accession>Q9PEB6</accession>
<reference key="1">
    <citation type="journal article" date="2000" name="Nature">
        <title>The genome sequence of the plant pathogen Xylella fastidiosa.</title>
        <authorList>
            <person name="Simpson A.J.G."/>
            <person name="Reinach F.C."/>
            <person name="Arruda P."/>
            <person name="Abreu F.A."/>
            <person name="Acencio M."/>
            <person name="Alvarenga R."/>
            <person name="Alves L.M.C."/>
            <person name="Araya J.E."/>
            <person name="Baia G.S."/>
            <person name="Baptista C.S."/>
            <person name="Barros M.H."/>
            <person name="Bonaccorsi E.D."/>
            <person name="Bordin S."/>
            <person name="Bove J.M."/>
            <person name="Briones M.R.S."/>
            <person name="Bueno M.R.P."/>
            <person name="Camargo A.A."/>
            <person name="Camargo L.E.A."/>
            <person name="Carraro D.M."/>
            <person name="Carrer H."/>
            <person name="Colauto N.B."/>
            <person name="Colombo C."/>
            <person name="Costa F.F."/>
            <person name="Costa M.C.R."/>
            <person name="Costa-Neto C.M."/>
            <person name="Coutinho L.L."/>
            <person name="Cristofani M."/>
            <person name="Dias-Neto E."/>
            <person name="Docena C."/>
            <person name="El-Dorry H."/>
            <person name="Facincani A.P."/>
            <person name="Ferreira A.J.S."/>
            <person name="Ferreira V.C.A."/>
            <person name="Ferro J.A."/>
            <person name="Fraga J.S."/>
            <person name="Franca S.C."/>
            <person name="Franco M.C."/>
            <person name="Frohme M."/>
            <person name="Furlan L.R."/>
            <person name="Garnier M."/>
            <person name="Goldman G.H."/>
            <person name="Goldman M.H.S."/>
            <person name="Gomes S.L."/>
            <person name="Gruber A."/>
            <person name="Ho P.L."/>
            <person name="Hoheisel J.D."/>
            <person name="Junqueira M.L."/>
            <person name="Kemper E.L."/>
            <person name="Kitajima J.P."/>
            <person name="Krieger J.E."/>
            <person name="Kuramae E.E."/>
            <person name="Laigret F."/>
            <person name="Lambais M.R."/>
            <person name="Leite L.C.C."/>
            <person name="Lemos E.G.M."/>
            <person name="Lemos M.V.F."/>
            <person name="Lopes S.A."/>
            <person name="Lopes C.R."/>
            <person name="Machado J.A."/>
            <person name="Machado M.A."/>
            <person name="Madeira A.M.B.N."/>
            <person name="Madeira H.M.F."/>
            <person name="Marino C.L."/>
            <person name="Marques M.V."/>
            <person name="Martins E.A.L."/>
            <person name="Martins E.M.F."/>
            <person name="Matsukuma A.Y."/>
            <person name="Menck C.F.M."/>
            <person name="Miracca E.C."/>
            <person name="Miyaki C.Y."/>
            <person name="Monteiro-Vitorello C.B."/>
            <person name="Moon D.H."/>
            <person name="Nagai M.A."/>
            <person name="Nascimento A.L.T.O."/>
            <person name="Netto L.E.S."/>
            <person name="Nhani A. Jr."/>
            <person name="Nobrega F.G."/>
            <person name="Nunes L.R."/>
            <person name="Oliveira M.A."/>
            <person name="de Oliveira M.C."/>
            <person name="de Oliveira R.C."/>
            <person name="Palmieri D.A."/>
            <person name="Paris A."/>
            <person name="Peixoto B.R."/>
            <person name="Pereira G.A.G."/>
            <person name="Pereira H.A. Jr."/>
            <person name="Pesquero J.B."/>
            <person name="Quaggio R.B."/>
            <person name="Roberto P.G."/>
            <person name="Rodrigues V."/>
            <person name="de Rosa A.J.M."/>
            <person name="de Rosa V.E. Jr."/>
            <person name="de Sa R.G."/>
            <person name="Santelli R.V."/>
            <person name="Sawasaki H.E."/>
            <person name="da Silva A.C.R."/>
            <person name="da Silva A.M."/>
            <person name="da Silva F.R."/>
            <person name="Silva W.A. Jr."/>
            <person name="da Silveira J.F."/>
            <person name="Silvestri M.L.Z."/>
            <person name="Siqueira W.J."/>
            <person name="de Souza A.A."/>
            <person name="de Souza A.P."/>
            <person name="Terenzi M.F."/>
            <person name="Truffi D."/>
            <person name="Tsai S.M."/>
            <person name="Tsuhako M.H."/>
            <person name="Vallada H."/>
            <person name="Van Sluys M.A."/>
            <person name="Verjovski-Almeida S."/>
            <person name="Vettore A.L."/>
            <person name="Zago M.A."/>
            <person name="Zatz M."/>
            <person name="Meidanis J."/>
            <person name="Setubal J.C."/>
        </authorList>
    </citation>
    <scope>NUCLEOTIDE SEQUENCE [LARGE SCALE GENOMIC DNA]</scope>
    <source>
        <strain>9a5c</strain>
    </source>
</reference>
<protein>
    <recommendedName>
        <fullName>Lysine--tRNA ligase</fullName>
        <ecNumber>6.1.1.6</ecNumber>
    </recommendedName>
    <alternativeName>
        <fullName>Lysyl-tRNA synthetase</fullName>
        <shortName>LysRS</shortName>
    </alternativeName>
</protein>